<accession>L0GCJ1</accession>
<proteinExistence type="evidence at transcript level"/>
<evidence type="ECO:0000250" key="1"/>
<evidence type="ECO:0000305" key="2"/>
<reference key="1">
    <citation type="journal article" date="2013" name="Toxicon">
        <title>Characterization of the venom from the Australian scorpion Urodacus yaschenkoi: molecular mass analysis of components, cDNA sequences and peptides with antimicrobial activity.</title>
        <authorList>
            <person name="Luna-Ramirez K."/>
            <person name="Quintero-Hernandez V."/>
            <person name="Vargas-Jaimes L."/>
            <person name="Batista C.V."/>
            <person name="Winkel K.D."/>
            <person name="Possani L.D."/>
        </authorList>
    </citation>
    <scope>NUCLEOTIDE SEQUENCE [MRNA]</scope>
    <source>
        <tissue>Venom gland</tissue>
    </source>
</reference>
<keyword id="KW-0027">Amidation</keyword>
<keyword id="KW-1015">Disulfide bond</keyword>
<keyword id="KW-0964">Secreted</keyword>
<keyword id="KW-0732">Signal</keyword>
<feature type="signal peptide" evidence="1">
    <location>
        <begin position="1"/>
        <end position="24"/>
    </location>
</feature>
<feature type="chain" id="PRO_5001091943" description="La1-like protein 13">
    <location>
        <begin position="25"/>
        <end position="97"/>
    </location>
</feature>
<feature type="modified residue" description="Lysine amide" evidence="1">
    <location>
        <position position="97"/>
    </location>
</feature>
<protein>
    <recommendedName>
        <fullName>La1-like protein 13</fullName>
    </recommendedName>
</protein>
<comment type="subcellular location">
    <subcellularLocation>
        <location evidence="1">Secreted</location>
    </subcellularLocation>
</comment>
<comment type="tissue specificity">
    <text>Expressed by the venom gland.</text>
</comment>
<comment type="PTM">
    <text evidence="1">Contains 4 disulfide bonds.</text>
</comment>
<comment type="similarity">
    <text evidence="2">Belongs to the scorpion La1-like peptide family.</text>
</comment>
<dbReference type="EMBL" id="JX274246">
    <property type="protein sequence ID" value="AGA82760.1"/>
    <property type="molecule type" value="mRNA"/>
</dbReference>
<dbReference type="SMR" id="L0GCJ1"/>
<dbReference type="GO" id="GO:0005576">
    <property type="term" value="C:extracellular region"/>
    <property type="evidence" value="ECO:0007669"/>
    <property type="project" value="UniProtKB-SubCell"/>
</dbReference>
<dbReference type="InterPro" id="IPR029277">
    <property type="entry name" value="SVWC_dom"/>
</dbReference>
<dbReference type="Pfam" id="PF15430">
    <property type="entry name" value="SVWC"/>
    <property type="match status" value="1"/>
</dbReference>
<dbReference type="SMART" id="SM01318">
    <property type="entry name" value="SVWC"/>
    <property type="match status" value="1"/>
</dbReference>
<organism>
    <name type="scientific">Urodacus yaschenkoi</name>
    <name type="common">Inland robust scorpion</name>
    <dbReference type="NCBI Taxonomy" id="1273102"/>
    <lineage>
        <taxon>Eukaryota</taxon>
        <taxon>Metazoa</taxon>
        <taxon>Ecdysozoa</taxon>
        <taxon>Arthropoda</taxon>
        <taxon>Chelicerata</taxon>
        <taxon>Arachnida</taxon>
        <taxon>Scorpiones</taxon>
        <taxon>Iurida</taxon>
        <taxon>Scorpionoidea</taxon>
        <taxon>Scorpionidae</taxon>
        <taxon>Urodacinae</taxon>
        <taxon>Urodacus</taxon>
    </lineage>
</organism>
<sequence length="98" mass="10655">MERILKPVFLAILIVLSFSSQCMGFGESCQAGKHIVPVGQQQIDSSTCTLYKCSNYNRKYALETTSCATLKMKSGCRMVPGAATAPFPNCCPMMMCKG</sequence>
<name>LA1D_UROYA</name>